<gene>
    <name evidence="1" type="primary">rimO</name>
    <name type="ordered locus">FP1403</name>
</gene>
<keyword id="KW-0004">4Fe-4S</keyword>
<keyword id="KW-0963">Cytoplasm</keyword>
<keyword id="KW-0408">Iron</keyword>
<keyword id="KW-0411">Iron-sulfur</keyword>
<keyword id="KW-0479">Metal-binding</keyword>
<keyword id="KW-1185">Reference proteome</keyword>
<keyword id="KW-0949">S-adenosyl-L-methionine</keyword>
<keyword id="KW-0808">Transferase</keyword>
<sequence length="433" mass="49097">MRTKSLKKNKINVITLGCSKNVYDSEVLMGQLKASGKNVVHEEEGNIVVINTCGFIDNAKAESVNTILEYADKKERGLVDKVFVTGCLSERYRPDLEKEIPNVDQYFGTTELPALLKALGADYRHELLGERLTTTPKNYAYLKISEGCDRPCSFCAIPLMRGKNVSQTIEKLVKEAEGLAKNGVKELILIAQDLTYYGLDLYKKRALGELLEALVKIEGIEWIRLHYAFPTGFPMDVLEIMKREPKICNYIDIPLQHISDSILKSMKRGTTREKTTKLLKDFRAAVPGMAIRTTLIVGYPGETEEDFEILKEFVQEMKFDRMGCFAYSHEENTGAYELVDDVPDEVKQARSLEIMDLQSQISWDLNQEKLGQTFRCIIDRKEGGHFVGRTEFDSPDVDNEVLIDATKHYVKTGEFVNIKIIEATEFDLYGEPA</sequence>
<reference key="1">
    <citation type="journal article" date="2007" name="Nat. Biotechnol.">
        <title>Complete genome sequence of the fish pathogen Flavobacterium psychrophilum.</title>
        <authorList>
            <person name="Duchaud E."/>
            <person name="Boussaha M."/>
            <person name="Loux V."/>
            <person name="Bernardet J.-F."/>
            <person name="Michel C."/>
            <person name="Kerouault B."/>
            <person name="Mondot S."/>
            <person name="Nicolas P."/>
            <person name="Bossy R."/>
            <person name="Caron C."/>
            <person name="Bessieres P."/>
            <person name="Gibrat J.-F."/>
            <person name="Claverol S."/>
            <person name="Dumetz F."/>
            <person name="Le Henaff M."/>
            <person name="Benmansour A."/>
        </authorList>
    </citation>
    <scope>NUCLEOTIDE SEQUENCE [LARGE SCALE GENOMIC DNA]</scope>
    <source>
        <strain>ATCC 49511 / DSM 21280 / CIP 103535 / JIP02/86</strain>
    </source>
</reference>
<evidence type="ECO:0000255" key="1">
    <source>
        <dbReference type="HAMAP-Rule" id="MF_01865"/>
    </source>
</evidence>
<evidence type="ECO:0000255" key="2">
    <source>
        <dbReference type="PROSITE-ProRule" id="PRU01266"/>
    </source>
</evidence>
<organism>
    <name type="scientific">Flavobacterium psychrophilum (strain ATCC 49511 / DSM 21280 / CIP 103535 / JIP02/86)</name>
    <dbReference type="NCBI Taxonomy" id="402612"/>
    <lineage>
        <taxon>Bacteria</taxon>
        <taxon>Pseudomonadati</taxon>
        <taxon>Bacteroidota</taxon>
        <taxon>Flavobacteriia</taxon>
        <taxon>Flavobacteriales</taxon>
        <taxon>Flavobacteriaceae</taxon>
        <taxon>Flavobacterium</taxon>
    </lineage>
</organism>
<protein>
    <recommendedName>
        <fullName evidence="1">Ribosomal protein uS12 methylthiotransferase RimO</fullName>
        <shortName evidence="1">uS12 MTTase</shortName>
        <shortName evidence="1">uS12 methylthiotransferase</shortName>
        <ecNumber evidence="1">2.8.4.4</ecNumber>
    </recommendedName>
    <alternativeName>
        <fullName evidence="1">Ribosomal protein uS12 (aspartate-C(3))-methylthiotransferase</fullName>
    </alternativeName>
    <alternativeName>
        <fullName evidence="1">Ribosome maturation factor RimO</fullName>
    </alternativeName>
</protein>
<comment type="function">
    <text evidence="1">Catalyzes the methylthiolation of an aspartic acid residue of ribosomal protein uS12.</text>
</comment>
<comment type="catalytic activity">
    <reaction evidence="1">
        <text>L-aspartate(89)-[ribosomal protein uS12]-hydrogen + (sulfur carrier)-SH + AH2 + 2 S-adenosyl-L-methionine = 3-methylsulfanyl-L-aspartate(89)-[ribosomal protein uS12]-hydrogen + (sulfur carrier)-H + 5'-deoxyadenosine + L-methionine + A + S-adenosyl-L-homocysteine + 2 H(+)</text>
        <dbReference type="Rhea" id="RHEA:37087"/>
        <dbReference type="Rhea" id="RHEA-COMP:10460"/>
        <dbReference type="Rhea" id="RHEA-COMP:10461"/>
        <dbReference type="Rhea" id="RHEA-COMP:14737"/>
        <dbReference type="Rhea" id="RHEA-COMP:14739"/>
        <dbReference type="ChEBI" id="CHEBI:13193"/>
        <dbReference type="ChEBI" id="CHEBI:15378"/>
        <dbReference type="ChEBI" id="CHEBI:17319"/>
        <dbReference type="ChEBI" id="CHEBI:17499"/>
        <dbReference type="ChEBI" id="CHEBI:29917"/>
        <dbReference type="ChEBI" id="CHEBI:29961"/>
        <dbReference type="ChEBI" id="CHEBI:57844"/>
        <dbReference type="ChEBI" id="CHEBI:57856"/>
        <dbReference type="ChEBI" id="CHEBI:59789"/>
        <dbReference type="ChEBI" id="CHEBI:64428"/>
        <dbReference type="ChEBI" id="CHEBI:73599"/>
        <dbReference type="EC" id="2.8.4.4"/>
    </reaction>
</comment>
<comment type="cofactor">
    <cofactor evidence="1">
        <name>[4Fe-4S] cluster</name>
        <dbReference type="ChEBI" id="CHEBI:49883"/>
    </cofactor>
    <text evidence="1">Binds 2 [4Fe-4S] clusters. One cluster is coordinated with 3 cysteines and an exchangeable S-adenosyl-L-methionine.</text>
</comment>
<comment type="subcellular location">
    <subcellularLocation>
        <location evidence="1">Cytoplasm</location>
    </subcellularLocation>
</comment>
<comment type="similarity">
    <text evidence="1">Belongs to the methylthiotransferase family. RimO subfamily.</text>
</comment>
<name>RIMO_FLAPJ</name>
<accession>A6GZF6</accession>
<feature type="chain" id="PRO_0000374836" description="Ribosomal protein uS12 methylthiotransferase RimO">
    <location>
        <begin position="1"/>
        <end position="433"/>
    </location>
</feature>
<feature type="domain" description="MTTase N-terminal" evidence="1">
    <location>
        <begin position="9"/>
        <end position="124"/>
    </location>
</feature>
<feature type="domain" description="Radical SAM core" evidence="2">
    <location>
        <begin position="134"/>
        <end position="364"/>
    </location>
</feature>
<feature type="domain" description="TRAM" evidence="1">
    <location>
        <begin position="367"/>
        <end position="433"/>
    </location>
</feature>
<feature type="binding site" evidence="1">
    <location>
        <position position="18"/>
    </location>
    <ligand>
        <name>[4Fe-4S] cluster</name>
        <dbReference type="ChEBI" id="CHEBI:49883"/>
        <label>1</label>
    </ligand>
</feature>
<feature type="binding site" evidence="1">
    <location>
        <position position="53"/>
    </location>
    <ligand>
        <name>[4Fe-4S] cluster</name>
        <dbReference type="ChEBI" id="CHEBI:49883"/>
        <label>1</label>
    </ligand>
</feature>
<feature type="binding site" evidence="1">
    <location>
        <position position="87"/>
    </location>
    <ligand>
        <name>[4Fe-4S] cluster</name>
        <dbReference type="ChEBI" id="CHEBI:49883"/>
        <label>1</label>
    </ligand>
</feature>
<feature type="binding site" evidence="1">
    <location>
        <position position="148"/>
    </location>
    <ligand>
        <name>[4Fe-4S] cluster</name>
        <dbReference type="ChEBI" id="CHEBI:49883"/>
        <label>2</label>
        <note>4Fe-4S-S-AdoMet</note>
    </ligand>
</feature>
<feature type="binding site" evidence="1">
    <location>
        <position position="152"/>
    </location>
    <ligand>
        <name>[4Fe-4S] cluster</name>
        <dbReference type="ChEBI" id="CHEBI:49883"/>
        <label>2</label>
        <note>4Fe-4S-S-AdoMet</note>
    </ligand>
</feature>
<feature type="binding site" evidence="1">
    <location>
        <position position="155"/>
    </location>
    <ligand>
        <name>[4Fe-4S] cluster</name>
        <dbReference type="ChEBI" id="CHEBI:49883"/>
        <label>2</label>
        <note>4Fe-4S-S-AdoMet</note>
    </ligand>
</feature>
<proteinExistence type="inferred from homology"/>
<dbReference type="EC" id="2.8.4.4" evidence="1"/>
<dbReference type="EMBL" id="AM398681">
    <property type="protein sequence ID" value="CAL43479.1"/>
    <property type="molecule type" value="Genomic_DNA"/>
</dbReference>
<dbReference type="RefSeq" id="WP_011963524.1">
    <property type="nucleotide sequence ID" value="NC_009613.3"/>
</dbReference>
<dbReference type="RefSeq" id="YP_001296288.1">
    <property type="nucleotide sequence ID" value="NC_009613.3"/>
</dbReference>
<dbReference type="SMR" id="A6GZF6"/>
<dbReference type="STRING" id="402612.FP1403"/>
<dbReference type="EnsemblBacteria" id="CAL43479">
    <property type="protein sequence ID" value="CAL43479"/>
    <property type="gene ID" value="FP1403"/>
</dbReference>
<dbReference type="GeneID" id="66552859"/>
<dbReference type="KEGG" id="fps:FP1403"/>
<dbReference type="PATRIC" id="fig|402612.5.peg.1414"/>
<dbReference type="eggNOG" id="COG0621">
    <property type="taxonomic scope" value="Bacteria"/>
</dbReference>
<dbReference type="HOGENOM" id="CLU_018697_0_1_10"/>
<dbReference type="OrthoDB" id="9805215at2"/>
<dbReference type="Proteomes" id="UP000006394">
    <property type="component" value="Chromosome"/>
</dbReference>
<dbReference type="GO" id="GO:0005829">
    <property type="term" value="C:cytosol"/>
    <property type="evidence" value="ECO:0007669"/>
    <property type="project" value="TreeGrafter"/>
</dbReference>
<dbReference type="GO" id="GO:0051539">
    <property type="term" value="F:4 iron, 4 sulfur cluster binding"/>
    <property type="evidence" value="ECO:0007669"/>
    <property type="project" value="UniProtKB-UniRule"/>
</dbReference>
<dbReference type="GO" id="GO:0035599">
    <property type="term" value="F:aspartic acid methylthiotransferase activity"/>
    <property type="evidence" value="ECO:0007669"/>
    <property type="project" value="TreeGrafter"/>
</dbReference>
<dbReference type="GO" id="GO:0046872">
    <property type="term" value="F:metal ion binding"/>
    <property type="evidence" value="ECO:0007669"/>
    <property type="project" value="UniProtKB-KW"/>
</dbReference>
<dbReference type="GO" id="GO:0103039">
    <property type="term" value="F:protein methylthiotransferase activity"/>
    <property type="evidence" value="ECO:0007669"/>
    <property type="project" value="UniProtKB-EC"/>
</dbReference>
<dbReference type="GO" id="GO:0006400">
    <property type="term" value="P:tRNA modification"/>
    <property type="evidence" value="ECO:0007669"/>
    <property type="project" value="InterPro"/>
</dbReference>
<dbReference type="CDD" id="cd01335">
    <property type="entry name" value="Radical_SAM"/>
    <property type="match status" value="1"/>
</dbReference>
<dbReference type="FunFam" id="3.80.30.20:FF:000001">
    <property type="entry name" value="tRNA-2-methylthio-N(6)-dimethylallyladenosine synthase 2"/>
    <property type="match status" value="1"/>
</dbReference>
<dbReference type="Gene3D" id="3.40.50.12160">
    <property type="entry name" value="Methylthiotransferase, N-terminal domain"/>
    <property type="match status" value="1"/>
</dbReference>
<dbReference type="Gene3D" id="2.40.50.140">
    <property type="entry name" value="Nucleic acid-binding proteins"/>
    <property type="match status" value="1"/>
</dbReference>
<dbReference type="Gene3D" id="3.80.30.20">
    <property type="entry name" value="tm_1862 like domain"/>
    <property type="match status" value="1"/>
</dbReference>
<dbReference type="HAMAP" id="MF_01865">
    <property type="entry name" value="MTTase_RimO"/>
    <property type="match status" value="1"/>
</dbReference>
<dbReference type="InterPro" id="IPR006638">
    <property type="entry name" value="Elp3/MiaA/NifB-like_rSAM"/>
</dbReference>
<dbReference type="InterPro" id="IPR005839">
    <property type="entry name" value="Methylthiotransferase"/>
</dbReference>
<dbReference type="InterPro" id="IPR020612">
    <property type="entry name" value="Methylthiotransferase_CS"/>
</dbReference>
<dbReference type="InterPro" id="IPR013848">
    <property type="entry name" value="Methylthiotransferase_N"/>
</dbReference>
<dbReference type="InterPro" id="IPR038135">
    <property type="entry name" value="Methylthiotransferase_N_sf"/>
</dbReference>
<dbReference type="InterPro" id="IPR012340">
    <property type="entry name" value="NA-bd_OB-fold"/>
</dbReference>
<dbReference type="InterPro" id="IPR005840">
    <property type="entry name" value="Ribosomal_uS12_MeSTrfase_RimO"/>
</dbReference>
<dbReference type="InterPro" id="IPR007197">
    <property type="entry name" value="rSAM"/>
</dbReference>
<dbReference type="InterPro" id="IPR023404">
    <property type="entry name" value="rSAM_horseshoe"/>
</dbReference>
<dbReference type="InterPro" id="IPR002792">
    <property type="entry name" value="TRAM_dom"/>
</dbReference>
<dbReference type="NCBIfam" id="TIGR01125">
    <property type="entry name" value="30S ribosomal protein S12 methylthiotransferase RimO"/>
    <property type="match status" value="1"/>
</dbReference>
<dbReference type="NCBIfam" id="TIGR00089">
    <property type="entry name" value="MiaB/RimO family radical SAM methylthiotransferase"/>
    <property type="match status" value="1"/>
</dbReference>
<dbReference type="PANTHER" id="PTHR43837">
    <property type="entry name" value="RIBOSOMAL PROTEIN S12 METHYLTHIOTRANSFERASE RIMO"/>
    <property type="match status" value="1"/>
</dbReference>
<dbReference type="PANTHER" id="PTHR43837:SF1">
    <property type="entry name" value="RIBOSOMAL PROTEIN US12 METHYLTHIOTRANSFERASE RIMO"/>
    <property type="match status" value="1"/>
</dbReference>
<dbReference type="Pfam" id="PF04055">
    <property type="entry name" value="Radical_SAM"/>
    <property type="match status" value="1"/>
</dbReference>
<dbReference type="Pfam" id="PF18693">
    <property type="entry name" value="TRAM_2"/>
    <property type="match status" value="1"/>
</dbReference>
<dbReference type="Pfam" id="PF00919">
    <property type="entry name" value="UPF0004"/>
    <property type="match status" value="1"/>
</dbReference>
<dbReference type="SFLD" id="SFLDG01082">
    <property type="entry name" value="B12-binding_domain_containing"/>
    <property type="match status" value="1"/>
</dbReference>
<dbReference type="SFLD" id="SFLDS00029">
    <property type="entry name" value="Radical_SAM"/>
    <property type="match status" value="1"/>
</dbReference>
<dbReference type="SFLD" id="SFLDF00274">
    <property type="entry name" value="ribosomal_protein_S12_methylth"/>
    <property type="match status" value="1"/>
</dbReference>
<dbReference type="SMART" id="SM00729">
    <property type="entry name" value="Elp3"/>
    <property type="match status" value="1"/>
</dbReference>
<dbReference type="SUPFAM" id="SSF102114">
    <property type="entry name" value="Radical SAM enzymes"/>
    <property type="match status" value="1"/>
</dbReference>
<dbReference type="PROSITE" id="PS51449">
    <property type="entry name" value="MTTASE_N"/>
    <property type="match status" value="1"/>
</dbReference>
<dbReference type="PROSITE" id="PS01278">
    <property type="entry name" value="MTTASE_RADICAL"/>
    <property type="match status" value="1"/>
</dbReference>
<dbReference type="PROSITE" id="PS51918">
    <property type="entry name" value="RADICAL_SAM"/>
    <property type="match status" value="1"/>
</dbReference>
<dbReference type="PROSITE" id="PS50926">
    <property type="entry name" value="TRAM"/>
    <property type="match status" value="1"/>
</dbReference>